<feature type="initiator methionine" description="Removed" evidence="1">
    <location>
        <position position="1"/>
    </location>
</feature>
<feature type="chain" id="PRO_0000294084" description="Ribose-phosphate pyrophosphokinase 2">
    <location>
        <begin position="2"/>
        <end position="318"/>
    </location>
</feature>
<feature type="region of interest" description="Binding of phosphoribosylpyrophosphate" evidence="2">
    <location>
        <begin position="212"/>
        <end position="227"/>
    </location>
</feature>
<feature type="binding site" evidence="1">
    <location>
        <begin position="96"/>
        <end position="101"/>
    </location>
    <ligand>
        <name>ATP</name>
        <dbReference type="ChEBI" id="CHEBI:30616"/>
    </ligand>
</feature>
<feature type="binding site" evidence="2">
    <location>
        <position position="128"/>
    </location>
    <ligand>
        <name>Mg(2+)</name>
        <dbReference type="ChEBI" id="CHEBI:18420"/>
    </ligand>
</feature>
<feature type="binding site" evidence="1">
    <location>
        <position position="130"/>
    </location>
    <ligand>
        <name>ATP</name>
        <dbReference type="ChEBI" id="CHEBI:30616"/>
    </ligand>
</feature>
<feature type="binding site" evidence="2">
    <location>
        <position position="130"/>
    </location>
    <ligand>
        <name>Mg(2+)</name>
        <dbReference type="ChEBI" id="CHEBI:18420"/>
    </ligand>
</feature>
<feature type="binding site" evidence="2">
    <location>
        <position position="139"/>
    </location>
    <ligand>
        <name>Mg(2+)</name>
        <dbReference type="ChEBI" id="CHEBI:18420"/>
    </ligand>
</feature>
<feature type="binding site" evidence="2">
    <location>
        <position position="143"/>
    </location>
    <ligand>
        <name>Mg(2+)</name>
        <dbReference type="ChEBI" id="CHEBI:18420"/>
    </ligand>
</feature>
<gene>
    <name type="primary">prps2</name>
    <name type="ORF">TGas127m07.1</name>
</gene>
<accession>Q5XGI0</accession>
<comment type="function">
    <text>Catalyzes the synthesis of phosphoribosylpyrophosphate (PRPP) that is essential for nucleotide synthesis.</text>
</comment>
<comment type="catalytic activity">
    <reaction>
        <text>D-ribose 5-phosphate + ATP = 5-phospho-alpha-D-ribose 1-diphosphate + AMP + H(+)</text>
        <dbReference type="Rhea" id="RHEA:15609"/>
        <dbReference type="ChEBI" id="CHEBI:15378"/>
        <dbReference type="ChEBI" id="CHEBI:30616"/>
        <dbReference type="ChEBI" id="CHEBI:58017"/>
        <dbReference type="ChEBI" id="CHEBI:78346"/>
        <dbReference type="ChEBI" id="CHEBI:456215"/>
        <dbReference type="EC" id="2.7.6.1"/>
    </reaction>
</comment>
<comment type="cofactor">
    <cofactor evidence="1">
        <name>Mg(2+)</name>
        <dbReference type="ChEBI" id="CHEBI:18420"/>
    </cofactor>
</comment>
<comment type="activity regulation">
    <text evidence="1">Activated by magnesium and inorganic phosphate. Competitively or non-competitively inhibited by ADP, 2,3-bisphosphoglyceride or GDP (By similarity).</text>
</comment>
<comment type="pathway">
    <text>Metabolic intermediate biosynthesis; 5-phospho-alpha-D-ribose 1-diphosphate biosynthesis; 5-phospho-alpha-D-ribose 1-diphosphate from D-ribose 5-phosphate (route I): step 1/1.</text>
</comment>
<comment type="subunit">
    <text evidence="1">Homodimer. The active form is probably a hexamer composed of 3 homodimers (By similarity).</text>
</comment>
<comment type="similarity">
    <text evidence="3">Belongs to the ribose-phosphate pyrophosphokinase family.</text>
</comment>
<evidence type="ECO:0000250" key="1"/>
<evidence type="ECO:0000255" key="2"/>
<evidence type="ECO:0000305" key="3"/>
<dbReference type="EC" id="2.7.6.1"/>
<dbReference type="EMBL" id="CR848150">
    <property type="protein sequence ID" value="CAJ82569.1"/>
    <property type="molecule type" value="mRNA"/>
</dbReference>
<dbReference type="EMBL" id="BC084459">
    <property type="protein sequence ID" value="AAH84459.1"/>
    <property type="molecule type" value="mRNA"/>
</dbReference>
<dbReference type="RefSeq" id="NP_001011074.1">
    <property type="nucleotide sequence ID" value="NM_001011074.2"/>
</dbReference>
<dbReference type="RefSeq" id="XP_012812296.1">
    <property type="nucleotide sequence ID" value="XM_012956842.3"/>
</dbReference>
<dbReference type="SMR" id="Q5XGI0"/>
<dbReference type="FunCoup" id="Q5XGI0">
    <property type="interactions" value="976"/>
</dbReference>
<dbReference type="STRING" id="8364.ENSXETP00000039252"/>
<dbReference type="PaxDb" id="8364-ENSXETP00000060389"/>
<dbReference type="GeneID" id="496485"/>
<dbReference type="KEGG" id="xtr:496485"/>
<dbReference type="AGR" id="Xenbase:XB-GENE-983985"/>
<dbReference type="CTD" id="5634"/>
<dbReference type="Xenbase" id="XB-GENE-983985">
    <property type="gene designation" value="prps2"/>
</dbReference>
<dbReference type="eggNOG" id="KOG1448">
    <property type="taxonomic scope" value="Eukaryota"/>
</dbReference>
<dbReference type="InParanoid" id="Q5XGI0"/>
<dbReference type="OMA" id="LLPEHKC"/>
<dbReference type="OrthoDB" id="413572at2759"/>
<dbReference type="Reactome" id="R-XTR-73843">
    <property type="pathway name" value="5-Phosphoribose 1-diphosphate biosynthesis"/>
</dbReference>
<dbReference type="UniPathway" id="UPA00087">
    <property type="reaction ID" value="UER00172"/>
</dbReference>
<dbReference type="Proteomes" id="UP000008143">
    <property type="component" value="Chromosome 2"/>
</dbReference>
<dbReference type="Bgee" id="ENSXETG00000005345">
    <property type="expression patterns" value="Expressed in skeletal muscle tissue and 13 other cell types or tissues"/>
</dbReference>
<dbReference type="ExpressionAtlas" id="Q5XGI0">
    <property type="expression patterns" value="baseline"/>
</dbReference>
<dbReference type="GO" id="GO:0005524">
    <property type="term" value="F:ATP binding"/>
    <property type="evidence" value="ECO:0000250"/>
    <property type="project" value="UniProtKB"/>
</dbReference>
<dbReference type="GO" id="GO:0016301">
    <property type="term" value="F:kinase activity"/>
    <property type="evidence" value="ECO:0007669"/>
    <property type="project" value="UniProtKB-KW"/>
</dbReference>
<dbReference type="GO" id="GO:0000287">
    <property type="term" value="F:magnesium ion binding"/>
    <property type="evidence" value="ECO:0007669"/>
    <property type="project" value="InterPro"/>
</dbReference>
<dbReference type="GO" id="GO:0042803">
    <property type="term" value="F:protein homodimerization activity"/>
    <property type="evidence" value="ECO:0000250"/>
    <property type="project" value="UniProtKB"/>
</dbReference>
<dbReference type="GO" id="GO:0004749">
    <property type="term" value="F:ribose phosphate diphosphokinase activity"/>
    <property type="evidence" value="ECO:0000250"/>
    <property type="project" value="UniProtKB"/>
</dbReference>
<dbReference type="GO" id="GO:0006015">
    <property type="term" value="P:5-phosphoribose 1-diphosphate biosynthetic process"/>
    <property type="evidence" value="ECO:0007669"/>
    <property type="project" value="UniProtKB-UniPathway"/>
</dbReference>
<dbReference type="GO" id="GO:0009165">
    <property type="term" value="P:nucleotide biosynthetic process"/>
    <property type="evidence" value="ECO:0007669"/>
    <property type="project" value="UniProtKB-KW"/>
</dbReference>
<dbReference type="GO" id="GO:0009156">
    <property type="term" value="P:ribonucleoside monophosphate biosynthetic process"/>
    <property type="evidence" value="ECO:0007669"/>
    <property type="project" value="InterPro"/>
</dbReference>
<dbReference type="CDD" id="cd06223">
    <property type="entry name" value="PRTases_typeI"/>
    <property type="match status" value="1"/>
</dbReference>
<dbReference type="FunFam" id="3.40.50.2020:FF:000031">
    <property type="entry name" value="Probable PRS4-ribose-phosphate pyrophosphokinase 3"/>
    <property type="match status" value="1"/>
</dbReference>
<dbReference type="FunFam" id="3.40.50.2020:FF:000005">
    <property type="entry name" value="Ribose-phosphate pyrophosphokinase 1"/>
    <property type="match status" value="1"/>
</dbReference>
<dbReference type="Gene3D" id="3.40.50.2020">
    <property type="match status" value="2"/>
</dbReference>
<dbReference type="HAMAP" id="MF_00583_B">
    <property type="entry name" value="RibP_PPkinase_B"/>
    <property type="match status" value="1"/>
</dbReference>
<dbReference type="InterPro" id="IPR000842">
    <property type="entry name" value="PRib_PP_synth_CS"/>
</dbReference>
<dbReference type="InterPro" id="IPR029099">
    <property type="entry name" value="Pribosyltran_N"/>
</dbReference>
<dbReference type="InterPro" id="IPR000836">
    <property type="entry name" value="PRibTrfase_dom"/>
</dbReference>
<dbReference type="InterPro" id="IPR029057">
    <property type="entry name" value="PRTase-like"/>
</dbReference>
<dbReference type="InterPro" id="IPR005946">
    <property type="entry name" value="Rib-P_diPkinase"/>
</dbReference>
<dbReference type="InterPro" id="IPR037515">
    <property type="entry name" value="Rib-P_diPkinase_bac"/>
</dbReference>
<dbReference type="NCBIfam" id="NF002320">
    <property type="entry name" value="PRK01259.1"/>
    <property type="match status" value="1"/>
</dbReference>
<dbReference type="NCBIfam" id="TIGR01251">
    <property type="entry name" value="ribP_PPkin"/>
    <property type="match status" value="1"/>
</dbReference>
<dbReference type="PANTHER" id="PTHR10210">
    <property type="entry name" value="RIBOSE-PHOSPHATE DIPHOSPHOKINASE FAMILY MEMBER"/>
    <property type="match status" value="1"/>
</dbReference>
<dbReference type="PANTHER" id="PTHR10210:SF32">
    <property type="entry name" value="RIBOSE-PHOSPHATE PYROPHOSPHOKINASE 2"/>
    <property type="match status" value="1"/>
</dbReference>
<dbReference type="Pfam" id="PF14572">
    <property type="entry name" value="Pribosyl_synth"/>
    <property type="match status" value="1"/>
</dbReference>
<dbReference type="Pfam" id="PF13793">
    <property type="entry name" value="Pribosyltran_N"/>
    <property type="match status" value="1"/>
</dbReference>
<dbReference type="SMART" id="SM01400">
    <property type="entry name" value="Pribosyltran_N"/>
    <property type="match status" value="1"/>
</dbReference>
<dbReference type="SUPFAM" id="SSF53271">
    <property type="entry name" value="PRTase-like"/>
    <property type="match status" value="1"/>
</dbReference>
<dbReference type="PROSITE" id="PS00114">
    <property type="entry name" value="PRPP_SYNTHASE"/>
    <property type="match status" value="1"/>
</dbReference>
<proteinExistence type="evidence at transcript level"/>
<keyword id="KW-0067">ATP-binding</keyword>
<keyword id="KW-0418">Kinase</keyword>
<keyword id="KW-0460">Magnesium</keyword>
<keyword id="KW-0479">Metal-binding</keyword>
<keyword id="KW-0545">Nucleotide biosynthesis</keyword>
<keyword id="KW-0547">Nucleotide-binding</keyword>
<keyword id="KW-1185">Reference proteome</keyword>
<keyword id="KW-0808">Transferase</keyword>
<name>PRPS2_XENTR</name>
<protein>
    <recommendedName>
        <fullName>Ribose-phosphate pyrophosphokinase 2</fullName>
        <ecNumber>2.7.6.1</ecNumber>
    </recommendedName>
    <alternativeName>
        <fullName>Phosphoribosyl pyrophosphate synthase II</fullName>
        <shortName>PRS-II</shortName>
    </alternativeName>
</protein>
<organism>
    <name type="scientific">Xenopus tropicalis</name>
    <name type="common">Western clawed frog</name>
    <name type="synonym">Silurana tropicalis</name>
    <dbReference type="NCBI Taxonomy" id="8364"/>
    <lineage>
        <taxon>Eukaryota</taxon>
        <taxon>Metazoa</taxon>
        <taxon>Chordata</taxon>
        <taxon>Craniata</taxon>
        <taxon>Vertebrata</taxon>
        <taxon>Euteleostomi</taxon>
        <taxon>Amphibia</taxon>
        <taxon>Batrachia</taxon>
        <taxon>Anura</taxon>
        <taxon>Pipoidea</taxon>
        <taxon>Pipidae</taxon>
        <taxon>Xenopodinae</taxon>
        <taxon>Xenopus</taxon>
        <taxon>Silurana</taxon>
    </lineage>
</organism>
<sequence>MPNIVLFSGSSHQDLSQKVAERLGLELGKVVTKKFSNQETSVEIGESVRGEDVYIIQSGCGEINDNLMELLIMINACKIASSSRVTAVIPCFPYARQDKKDKSRAPISAKLVANMLSVAGADHIITMDLHASQIQGFFDIPVDNLYAEPAVLQWIRENIPEWKNSIIVSPDAGGAKRVTSIADRLNVEFALIHKERKKANEVDRMVLVGDVKDRVAILVDDMADTCGTICHAADKLLSAGATKVYAILTHGIFSGPAISRINNAAFEAVVVTNTIPQEDKMKQCSKIQVIDISMILAEAIRRTHNGESVSYLFSHVPL</sequence>
<reference key="1">
    <citation type="submission" date="2006-10" db="EMBL/GenBank/DDBJ databases">
        <authorList>
            <consortium name="Sanger Xenopus tropicalis EST/cDNA project"/>
        </authorList>
    </citation>
    <scope>NUCLEOTIDE SEQUENCE [LARGE SCALE MRNA]</scope>
    <source>
        <tissue>Gastrula</tissue>
    </source>
</reference>
<reference key="2">
    <citation type="submission" date="2004-10" db="EMBL/GenBank/DDBJ databases">
        <authorList>
            <consortium name="NIH - Xenopus Gene Collection (XGC) project"/>
        </authorList>
    </citation>
    <scope>NUCLEOTIDE SEQUENCE [LARGE SCALE MRNA]</scope>
    <source>
        <tissue>Embryo</tissue>
    </source>
</reference>